<organism>
    <name type="scientific">Treponema denticola (strain ATCC 35405 / DSM 14222 / CIP 103919 / JCM 8153 / KCTC 15104)</name>
    <dbReference type="NCBI Taxonomy" id="243275"/>
    <lineage>
        <taxon>Bacteria</taxon>
        <taxon>Pseudomonadati</taxon>
        <taxon>Spirochaetota</taxon>
        <taxon>Spirochaetia</taxon>
        <taxon>Spirochaetales</taxon>
        <taxon>Treponemataceae</taxon>
        <taxon>Treponema</taxon>
    </lineage>
</organism>
<dbReference type="EC" id="2.7.1.24" evidence="1"/>
<dbReference type="EMBL" id="AE017226">
    <property type="protein sequence ID" value="AAS12155.1"/>
    <property type="molecule type" value="Genomic_DNA"/>
</dbReference>
<dbReference type="RefSeq" id="NP_972244.1">
    <property type="nucleotide sequence ID" value="NC_002967.9"/>
</dbReference>
<dbReference type="RefSeq" id="WP_002679322.1">
    <property type="nucleotide sequence ID" value="NC_002967.9"/>
</dbReference>
<dbReference type="SMR" id="Q73M71"/>
<dbReference type="STRING" id="243275.TDE_1638"/>
<dbReference type="PaxDb" id="243275-TDE_1638"/>
<dbReference type="GeneID" id="2739747"/>
<dbReference type="KEGG" id="tde:TDE_1638"/>
<dbReference type="PATRIC" id="fig|243275.7.peg.1566"/>
<dbReference type="eggNOG" id="COG0237">
    <property type="taxonomic scope" value="Bacteria"/>
</dbReference>
<dbReference type="HOGENOM" id="CLU_057180_2_2_12"/>
<dbReference type="OrthoDB" id="359604at2"/>
<dbReference type="UniPathway" id="UPA00241">
    <property type="reaction ID" value="UER00356"/>
</dbReference>
<dbReference type="Proteomes" id="UP000008212">
    <property type="component" value="Chromosome"/>
</dbReference>
<dbReference type="GO" id="GO:0005737">
    <property type="term" value="C:cytoplasm"/>
    <property type="evidence" value="ECO:0007669"/>
    <property type="project" value="UniProtKB-SubCell"/>
</dbReference>
<dbReference type="GO" id="GO:0005524">
    <property type="term" value="F:ATP binding"/>
    <property type="evidence" value="ECO:0007669"/>
    <property type="project" value="UniProtKB-UniRule"/>
</dbReference>
<dbReference type="GO" id="GO:0004140">
    <property type="term" value="F:dephospho-CoA kinase activity"/>
    <property type="evidence" value="ECO:0007669"/>
    <property type="project" value="UniProtKB-UniRule"/>
</dbReference>
<dbReference type="GO" id="GO:0015937">
    <property type="term" value="P:coenzyme A biosynthetic process"/>
    <property type="evidence" value="ECO:0007669"/>
    <property type="project" value="UniProtKB-UniRule"/>
</dbReference>
<dbReference type="CDD" id="cd02022">
    <property type="entry name" value="DPCK"/>
    <property type="match status" value="1"/>
</dbReference>
<dbReference type="Gene3D" id="3.40.50.300">
    <property type="entry name" value="P-loop containing nucleotide triphosphate hydrolases"/>
    <property type="match status" value="1"/>
</dbReference>
<dbReference type="HAMAP" id="MF_00376">
    <property type="entry name" value="Dephospho_CoA_kinase"/>
    <property type="match status" value="1"/>
</dbReference>
<dbReference type="InterPro" id="IPR001977">
    <property type="entry name" value="Depp_CoAkinase"/>
</dbReference>
<dbReference type="InterPro" id="IPR027417">
    <property type="entry name" value="P-loop_NTPase"/>
</dbReference>
<dbReference type="NCBIfam" id="TIGR00152">
    <property type="entry name" value="dephospho-CoA kinase"/>
    <property type="match status" value="1"/>
</dbReference>
<dbReference type="Pfam" id="PF01121">
    <property type="entry name" value="CoaE"/>
    <property type="match status" value="1"/>
</dbReference>
<dbReference type="SUPFAM" id="SSF52540">
    <property type="entry name" value="P-loop containing nucleoside triphosphate hydrolases"/>
    <property type="match status" value="1"/>
</dbReference>
<dbReference type="PROSITE" id="PS51219">
    <property type="entry name" value="DPCK"/>
    <property type="match status" value="1"/>
</dbReference>
<proteinExistence type="inferred from homology"/>
<sequence length="223" mass="25840">MDSVLNGRQSRQSLDAPSEPILIGLSGPSCSGKNTASTILQDYGFYCIDADAVSRKVFTEHEKEILNLFQAEAEKRGINLKNENGIDKKAFALLVFSDEELLKKHEAFILPIIEEKIWEEIKRAFTEKPERPILLNAPTLHKTSFIKKCLFILYIDAPFILRLIRAKKRDRLPLKNIWLRFSKQKKFFSQYFFLNADTIVVKNFWSSASLKRKLLQEVKKRGF</sequence>
<reference key="1">
    <citation type="journal article" date="2004" name="Proc. Natl. Acad. Sci. U.S.A.">
        <title>Comparison of the genome of the oral pathogen Treponema denticola with other spirochete genomes.</title>
        <authorList>
            <person name="Seshadri R."/>
            <person name="Myers G.S.A."/>
            <person name="Tettelin H."/>
            <person name="Eisen J.A."/>
            <person name="Heidelberg J.F."/>
            <person name="Dodson R.J."/>
            <person name="Davidsen T.M."/>
            <person name="DeBoy R.T."/>
            <person name="Fouts D.E."/>
            <person name="Haft D.H."/>
            <person name="Selengut J."/>
            <person name="Ren Q."/>
            <person name="Brinkac L.M."/>
            <person name="Madupu R."/>
            <person name="Kolonay J.F."/>
            <person name="Durkin S.A."/>
            <person name="Daugherty S.C."/>
            <person name="Shetty J."/>
            <person name="Shvartsbeyn A."/>
            <person name="Gebregeorgis E."/>
            <person name="Geer K."/>
            <person name="Tsegaye G."/>
            <person name="Malek J.A."/>
            <person name="Ayodeji B."/>
            <person name="Shatsman S."/>
            <person name="McLeod M.P."/>
            <person name="Smajs D."/>
            <person name="Howell J.K."/>
            <person name="Pal S."/>
            <person name="Amin A."/>
            <person name="Vashisth P."/>
            <person name="McNeill T.Z."/>
            <person name="Xiang Q."/>
            <person name="Sodergren E."/>
            <person name="Baca E."/>
            <person name="Weinstock G.M."/>
            <person name="Norris S.J."/>
            <person name="Fraser C.M."/>
            <person name="Paulsen I.T."/>
        </authorList>
    </citation>
    <scope>NUCLEOTIDE SEQUENCE [LARGE SCALE GENOMIC DNA]</scope>
    <source>
        <strain>ATCC 35405 / DSM 14222 / CIP 103919 / JCM 8153 / KCTC 15104</strain>
    </source>
</reference>
<comment type="function">
    <text evidence="1">Catalyzes the phosphorylation of the 3'-hydroxyl group of dephosphocoenzyme A to form coenzyme A.</text>
</comment>
<comment type="catalytic activity">
    <reaction evidence="1">
        <text>3'-dephospho-CoA + ATP = ADP + CoA + H(+)</text>
        <dbReference type="Rhea" id="RHEA:18245"/>
        <dbReference type="ChEBI" id="CHEBI:15378"/>
        <dbReference type="ChEBI" id="CHEBI:30616"/>
        <dbReference type="ChEBI" id="CHEBI:57287"/>
        <dbReference type="ChEBI" id="CHEBI:57328"/>
        <dbReference type="ChEBI" id="CHEBI:456216"/>
        <dbReference type="EC" id="2.7.1.24"/>
    </reaction>
</comment>
<comment type="pathway">
    <text evidence="1">Cofactor biosynthesis; coenzyme A biosynthesis; CoA from (R)-pantothenate: step 5/5.</text>
</comment>
<comment type="subcellular location">
    <subcellularLocation>
        <location evidence="1">Cytoplasm</location>
    </subcellularLocation>
</comment>
<comment type="similarity">
    <text evidence="1">Belongs to the CoaE family.</text>
</comment>
<protein>
    <recommendedName>
        <fullName evidence="1">Dephospho-CoA kinase</fullName>
        <ecNumber evidence="1">2.7.1.24</ecNumber>
    </recommendedName>
    <alternativeName>
        <fullName evidence="1">Dephosphocoenzyme A kinase</fullName>
    </alternativeName>
</protein>
<accession>Q73M71</accession>
<keyword id="KW-0067">ATP-binding</keyword>
<keyword id="KW-0173">Coenzyme A biosynthesis</keyword>
<keyword id="KW-0963">Cytoplasm</keyword>
<keyword id="KW-0418">Kinase</keyword>
<keyword id="KW-0547">Nucleotide-binding</keyword>
<keyword id="KW-1185">Reference proteome</keyword>
<keyword id="KW-0808">Transferase</keyword>
<evidence type="ECO:0000255" key="1">
    <source>
        <dbReference type="HAMAP-Rule" id="MF_00376"/>
    </source>
</evidence>
<feature type="chain" id="PRO_0000173025" description="Dephospho-CoA kinase">
    <location>
        <begin position="1"/>
        <end position="223"/>
    </location>
</feature>
<feature type="domain" description="DPCK" evidence="1">
    <location>
        <begin position="22"/>
        <end position="223"/>
    </location>
</feature>
<feature type="binding site" evidence="1">
    <location>
        <begin position="30"/>
        <end position="35"/>
    </location>
    <ligand>
        <name>ATP</name>
        <dbReference type="ChEBI" id="CHEBI:30616"/>
    </ligand>
</feature>
<gene>
    <name evidence="1" type="primary">coaE</name>
    <name type="ordered locus">TDE_1638</name>
</gene>
<name>COAE_TREDE</name>